<reference key="1">
    <citation type="journal article" date="2004" name="Genome Res.">
        <title>The status, quality, and expansion of the NIH full-length cDNA project: the Mammalian Gene Collection (MGC).</title>
        <authorList>
            <consortium name="The MGC Project Team"/>
        </authorList>
    </citation>
    <scope>NUCLEOTIDE SEQUENCE [LARGE SCALE MRNA] (ISOFORMS 1 AND 2)</scope>
    <source>
        <strain>C57BL/6J</strain>
        <tissue>Brain</tissue>
        <tissue>Fetal brain</tissue>
    </source>
</reference>
<reference key="2">
    <citation type="journal article" date="2005" name="Science">
        <title>The transcriptional landscape of the mammalian genome.</title>
        <authorList>
            <person name="Carninci P."/>
            <person name="Kasukawa T."/>
            <person name="Katayama S."/>
            <person name="Gough J."/>
            <person name="Frith M.C."/>
            <person name="Maeda N."/>
            <person name="Oyama R."/>
            <person name="Ravasi T."/>
            <person name="Lenhard B."/>
            <person name="Wells C."/>
            <person name="Kodzius R."/>
            <person name="Shimokawa K."/>
            <person name="Bajic V.B."/>
            <person name="Brenner S.E."/>
            <person name="Batalov S."/>
            <person name="Forrest A.R."/>
            <person name="Zavolan M."/>
            <person name="Davis M.J."/>
            <person name="Wilming L.G."/>
            <person name="Aidinis V."/>
            <person name="Allen J.E."/>
            <person name="Ambesi-Impiombato A."/>
            <person name="Apweiler R."/>
            <person name="Aturaliya R.N."/>
            <person name="Bailey T.L."/>
            <person name="Bansal M."/>
            <person name="Baxter L."/>
            <person name="Beisel K.W."/>
            <person name="Bersano T."/>
            <person name="Bono H."/>
            <person name="Chalk A.M."/>
            <person name="Chiu K.P."/>
            <person name="Choudhary V."/>
            <person name="Christoffels A."/>
            <person name="Clutterbuck D.R."/>
            <person name="Crowe M.L."/>
            <person name="Dalla E."/>
            <person name="Dalrymple B.P."/>
            <person name="de Bono B."/>
            <person name="Della Gatta G."/>
            <person name="di Bernardo D."/>
            <person name="Down T."/>
            <person name="Engstrom P."/>
            <person name="Fagiolini M."/>
            <person name="Faulkner G."/>
            <person name="Fletcher C.F."/>
            <person name="Fukushima T."/>
            <person name="Furuno M."/>
            <person name="Futaki S."/>
            <person name="Gariboldi M."/>
            <person name="Georgii-Hemming P."/>
            <person name="Gingeras T.R."/>
            <person name="Gojobori T."/>
            <person name="Green R.E."/>
            <person name="Gustincich S."/>
            <person name="Harbers M."/>
            <person name="Hayashi Y."/>
            <person name="Hensch T.K."/>
            <person name="Hirokawa N."/>
            <person name="Hill D."/>
            <person name="Huminiecki L."/>
            <person name="Iacono M."/>
            <person name="Ikeo K."/>
            <person name="Iwama A."/>
            <person name="Ishikawa T."/>
            <person name="Jakt M."/>
            <person name="Kanapin A."/>
            <person name="Katoh M."/>
            <person name="Kawasawa Y."/>
            <person name="Kelso J."/>
            <person name="Kitamura H."/>
            <person name="Kitano H."/>
            <person name="Kollias G."/>
            <person name="Krishnan S.P."/>
            <person name="Kruger A."/>
            <person name="Kummerfeld S.K."/>
            <person name="Kurochkin I.V."/>
            <person name="Lareau L.F."/>
            <person name="Lazarevic D."/>
            <person name="Lipovich L."/>
            <person name="Liu J."/>
            <person name="Liuni S."/>
            <person name="McWilliam S."/>
            <person name="Madan Babu M."/>
            <person name="Madera M."/>
            <person name="Marchionni L."/>
            <person name="Matsuda H."/>
            <person name="Matsuzawa S."/>
            <person name="Miki H."/>
            <person name="Mignone F."/>
            <person name="Miyake S."/>
            <person name="Morris K."/>
            <person name="Mottagui-Tabar S."/>
            <person name="Mulder N."/>
            <person name="Nakano N."/>
            <person name="Nakauchi H."/>
            <person name="Ng P."/>
            <person name="Nilsson R."/>
            <person name="Nishiguchi S."/>
            <person name="Nishikawa S."/>
            <person name="Nori F."/>
            <person name="Ohara O."/>
            <person name="Okazaki Y."/>
            <person name="Orlando V."/>
            <person name="Pang K.C."/>
            <person name="Pavan W.J."/>
            <person name="Pavesi G."/>
            <person name="Pesole G."/>
            <person name="Petrovsky N."/>
            <person name="Piazza S."/>
            <person name="Reed J."/>
            <person name="Reid J.F."/>
            <person name="Ring B.Z."/>
            <person name="Ringwald M."/>
            <person name="Rost B."/>
            <person name="Ruan Y."/>
            <person name="Salzberg S.L."/>
            <person name="Sandelin A."/>
            <person name="Schneider C."/>
            <person name="Schoenbach C."/>
            <person name="Sekiguchi K."/>
            <person name="Semple C.A."/>
            <person name="Seno S."/>
            <person name="Sessa L."/>
            <person name="Sheng Y."/>
            <person name="Shibata Y."/>
            <person name="Shimada H."/>
            <person name="Shimada K."/>
            <person name="Silva D."/>
            <person name="Sinclair B."/>
            <person name="Sperling S."/>
            <person name="Stupka E."/>
            <person name="Sugiura K."/>
            <person name="Sultana R."/>
            <person name="Takenaka Y."/>
            <person name="Taki K."/>
            <person name="Tammoja K."/>
            <person name="Tan S.L."/>
            <person name="Tang S."/>
            <person name="Taylor M.S."/>
            <person name="Tegner J."/>
            <person name="Teichmann S.A."/>
            <person name="Ueda H.R."/>
            <person name="van Nimwegen E."/>
            <person name="Verardo R."/>
            <person name="Wei C.L."/>
            <person name="Yagi K."/>
            <person name="Yamanishi H."/>
            <person name="Zabarovsky E."/>
            <person name="Zhu S."/>
            <person name="Zimmer A."/>
            <person name="Hide W."/>
            <person name="Bult C."/>
            <person name="Grimmond S.M."/>
            <person name="Teasdale R.D."/>
            <person name="Liu E.T."/>
            <person name="Brusic V."/>
            <person name="Quackenbush J."/>
            <person name="Wahlestedt C."/>
            <person name="Mattick J.S."/>
            <person name="Hume D.A."/>
            <person name="Kai C."/>
            <person name="Sasaki D."/>
            <person name="Tomaru Y."/>
            <person name="Fukuda S."/>
            <person name="Kanamori-Katayama M."/>
            <person name="Suzuki M."/>
            <person name="Aoki J."/>
            <person name="Arakawa T."/>
            <person name="Iida J."/>
            <person name="Imamura K."/>
            <person name="Itoh M."/>
            <person name="Kato T."/>
            <person name="Kawaji H."/>
            <person name="Kawagashira N."/>
            <person name="Kawashima T."/>
            <person name="Kojima M."/>
            <person name="Kondo S."/>
            <person name="Konno H."/>
            <person name="Nakano K."/>
            <person name="Ninomiya N."/>
            <person name="Nishio T."/>
            <person name="Okada M."/>
            <person name="Plessy C."/>
            <person name="Shibata K."/>
            <person name="Shiraki T."/>
            <person name="Suzuki S."/>
            <person name="Tagami M."/>
            <person name="Waki K."/>
            <person name="Watahiki A."/>
            <person name="Okamura-Oho Y."/>
            <person name="Suzuki H."/>
            <person name="Kawai J."/>
            <person name="Hayashizaki Y."/>
        </authorList>
    </citation>
    <scope>NUCLEOTIDE SEQUENCE [LARGE SCALE MRNA] OF 1-520 (ISOFORM 2)</scope>
    <source>
        <strain>C57BL/6J</strain>
        <tissue>Lung</tissue>
    </source>
</reference>
<reference key="3">
    <citation type="journal article" date="2004" name="Eur. J. Biochem.">
        <title>Characterization of mammalian eIF4E-family members.</title>
        <authorList>
            <person name="Joshi B."/>
            <person name="Cameron A."/>
            <person name="Jagus R."/>
        </authorList>
    </citation>
    <scope>INTERACTION WITH EIF4E3</scope>
</reference>
<reference key="4">
    <citation type="journal article" date="2007" name="Proc. Natl. Acad. Sci. U.S.A.">
        <title>Large-scale phosphorylation analysis of mouse liver.</title>
        <authorList>
            <person name="Villen J."/>
            <person name="Beausoleil S.A."/>
            <person name="Gerber S.A."/>
            <person name="Gygi S.P."/>
        </authorList>
    </citation>
    <scope>PHOSPHORYLATION [LARGE SCALE ANALYSIS] AT SER-1231</scope>
    <scope>IDENTIFICATION BY MASS SPECTROMETRY [LARGE SCALE ANALYSIS]</scope>
    <source>
        <tissue>Liver</tissue>
    </source>
</reference>
<reference key="5">
    <citation type="journal article" date="2008" name="J. Proteome Res.">
        <title>Specific phosphopeptide enrichment with immobilized titanium ion affinity chromatography adsorbent for phosphoproteome analysis.</title>
        <authorList>
            <person name="Zhou H."/>
            <person name="Ye M."/>
            <person name="Dong J."/>
            <person name="Han G."/>
            <person name="Jiang X."/>
            <person name="Wu R."/>
            <person name="Zou H."/>
        </authorList>
    </citation>
    <scope>PHOSPHORYLATION [LARGE SCALE ANALYSIS] AT SER-1211</scope>
    <scope>IDENTIFICATION BY MASS SPECTROMETRY [LARGE SCALE ANALYSIS]</scope>
    <source>
        <tissue>Liver</tissue>
    </source>
</reference>
<reference key="6">
    <citation type="journal article" date="2009" name="Immunity">
        <title>The phagosomal proteome in interferon-gamma-activated macrophages.</title>
        <authorList>
            <person name="Trost M."/>
            <person name="English L."/>
            <person name="Lemieux S."/>
            <person name="Courcelles M."/>
            <person name="Desjardins M."/>
            <person name="Thibault P."/>
        </authorList>
    </citation>
    <scope>PHOSPHORYLATION [LARGE SCALE ANALYSIS] AT SER-1189 AND SER-1231</scope>
    <scope>IDENTIFICATION BY MASS SPECTROMETRY [LARGE SCALE ANALYSIS]</scope>
</reference>
<reference key="7">
    <citation type="journal article" date="2009" name="Mol. Cell. Proteomics">
        <title>Large scale localization of protein phosphorylation by use of electron capture dissociation mass spectrometry.</title>
        <authorList>
            <person name="Sweet S.M."/>
            <person name="Bailey C.M."/>
            <person name="Cunningham D.L."/>
            <person name="Heath J.K."/>
            <person name="Cooper H.J."/>
        </authorList>
    </citation>
    <scope>PHOSPHORYLATION [LARGE SCALE ANALYSIS] AT SER-1231 AND SER-1597</scope>
    <scope>IDENTIFICATION BY MASS SPECTROMETRY [LARGE SCALE ANALYSIS]</scope>
    <source>
        <tissue>Embryonic fibroblast</tissue>
    </source>
</reference>
<reference key="8">
    <citation type="journal article" date="2010" name="Cell">
        <title>A tissue-specific atlas of mouse protein phosphorylation and expression.</title>
        <authorList>
            <person name="Huttlin E.L."/>
            <person name="Jedrychowski M.P."/>
            <person name="Elias J.E."/>
            <person name="Goswami T."/>
            <person name="Rad R."/>
            <person name="Beausoleil S.A."/>
            <person name="Villen J."/>
            <person name="Haas W."/>
            <person name="Sowa M.E."/>
            <person name="Gygi S.P."/>
        </authorList>
    </citation>
    <scope>PHOSPHORYLATION [LARGE SCALE ANALYSIS] AT SER-15; THR-214; SER-230; SER-1096 AND SER-1211</scope>
    <scope>IDENTIFICATION BY MASS SPECTROMETRY [LARGE SCALE ANALYSIS]</scope>
    <source>
        <tissue>Brain</tissue>
        <tissue>Brown adipose tissue</tissue>
        <tissue>Heart</tissue>
        <tissue>Kidney</tissue>
        <tissue>Liver</tissue>
        <tissue>Lung</tissue>
        <tissue>Pancreas</tissue>
        <tissue>Spleen</tissue>
        <tissue>Testis</tissue>
    </source>
</reference>
<reference key="9">
    <citation type="journal article" date="2013" name="Mol. Cell">
        <title>SIRT5-mediated lysine desuccinylation impacts diverse metabolic pathways.</title>
        <authorList>
            <person name="Park J."/>
            <person name="Chen Y."/>
            <person name="Tishkoff D.X."/>
            <person name="Peng C."/>
            <person name="Tan M."/>
            <person name="Dai L."/>
            <person name="Xie Z."/>
            <person name="Zhang Y."/>
            <person name="Zwaans B.M."/>
            <person name="Skinner M.E."/>
            <person name="Lombard D.B."/>
            <person name="Zhao Y."/>
        </authorList>
    </citation>
    <scope>ACETYLATION [LARGE SCALE ANALYSIS] AT LYS-606</scope>
    <scope>IDENTIFICATION BY MASS SPECTROMETRY [LARGE SCALE ANALYSIS]</scope>
    <source>
        <tissue>Embryonic fibroblast</tissue>
    </source>
</reference>
<reference key="10">
    <citation type="journal article" date="2014" name="Mol. Cell. Proteomics">
        <title>Immunoaffinity enrichment and mass spectrometry analysis of protein methylation.</title>
        <authorList>
            <person name="Guo A."/>
            <person name="Gu H."/>
            <person name="Zhou J."/>
            <person name="Mulhern D."/>
            <person name="Wang Y."/>
            <person name="Lee K.A."/>
            <person name="Yang V."/>
            <person name="Aguiar M."/>
            <person name="Kornhauser J."/>
            <person name="Jia X."/>
            <person name="Ren J."/>
            <person name="Beausoleil S.A."/>
            <person name="Silva J.C."/>
            <person name="Vemulapalli V."/>
            <person name="Bedford M.T."/>
            <person name="Comb M.J."/>
        </authorList>
    </citation>
    <scope>METHYLATION [LARGE SCALE ANALYSIS] AT ARG-117; ARG-689; ARG-1036 AND ARG-1046</scope>
    <scope>IDENTIFICATION BY MASS SPECTROMETRY [LARGE SCALE ANALYSIS]</scope>
    <source>
        <tissue>Brain</tissue>
        <tissue>Embryo</tissue>
    </source>
</reference>
<reference key="11">
    <citation type="journal article" date="2014" name="J. Biol. Chem.">
        <title>Norovirus translation requires an interaction between the C Terminus of the genome-linked viral protein VPg and eukaryotic translation initiation factor 4G.</title>
        <authorList>
            <person name="Chung L."/>
            <person name="Bailey D."/>
            <person name="Leen E.N."/>
            <person name="Emmott E.P."/>
            <person name="Chaudhry Y."/>
            <person name="Roberts L.O."/>
            <person name="Curry S."/>
            <person name="Locker N."/>
            <person name="Goodfellow I.G."/>
        </authorList>
    </citation>
    <scope>INTERACTION WITH MURINE NOROVIRUS 1 VIRAL GENOME-LINKED PROTEIN (MICROBIAL INFECTION)</scope>
</reference>
<reference key="12">
    <citation type="journal article" date="2019" name="Elife">
        <title>Noroviruses subvert the core stress granule component G3BP1 to promote viral VPg-dependent translation.</title>
        <authorList>
            <person name="Hosmillo M."/>
            <person name="Lu J."/>
            <person name="McAllaster M.R."/>
            <person name="Eaglesham J.B."/>
            <person name="Wang X."/>
            <person name="Emmott E."/>
            <person name="Domingues P."/>
            <person name="Chaudhry Y."/>
            <person name="Fitzmaurice T.J."/>
            <person name="Tung M.K."/>
            <person name="Panas M.D."/>
            <person name="McInerney G."/>
            <person name="Locker N."/>
            <person name="Wilen C.B."/>
            <person name="Goodfellow I.G."/>
        </authorList>
    </citation>
    <scope>INTERACTION WITH MURINE NOROVIRUS 1 VIRAL GENOME-LINKED PROTEIN (MICROBIAL INFECTION)</scope>
</reference>
<gene>
    <name type="primary">Eif4g1</name>
</gene>
<accession>Q6NZJ6</accession>
<accession>Q6NZN8</accession>
<accession>Q8BW99</accession>
<evidence type="ECO:0000250" key="1"/>
<evidence type="ECO:0000250" key="2">
    <source>
        <dbReference type="UniProtKB" id="Q04637"/>
    </source>
</evidence>
<evidence type="ECO:0000255" key="3">
    <source>
        <dbReference type="PROSITE-ProRule" id="PRU00695"/>
    </source>
</evidence>
<evidence type="ECO:0000255" key="4">
    <source>
        <dbReference type="PROSITE-ProRule" id="PRU00698"/>
    </source>
</evidence>
<evidence type="ECO:0000256" key="5">
    <source>
        <dbReference type="SAM" id="MobiDB-lite"/>
    </source>
</evidence>
<evidence type="ECO:0000269" key="6">
    <source>
    </source>
</evidence>
<evidence type="ECO:0000269" key="7">
    <source>
    </source>
</evidence>
<evidence type="ECO:0000269" key="8">
    <source>
    </source>
</evidence>
<evidence type="ECO:0000303" key="9">
    <source>
    </source>
</evidence>
<evidence type="ECO:0000303" key="10">
    <source>
    </source>
</evidence>
<evidence type="ECO:0000305" key="11"/>
<evidence type="ECO:0007744" key="12">
    <source>
    </source>
</evidence>
<evidence type="ECO:0007744" key="13">
    <source>
    </source>
</evidence>
<evidence type="ECO:0007744" key="14">
    <source>
    </source>
</evidence>
<evidence type="ECO:0007744" key="15">
    <source>
    </source>
</evidence>
<evidence type="ECO:0007744" key="16">
    <source>
    </source>
</evidence>
<evidence type="ECO:0007744" key="17">
    <source>
    </source>
</evidence>
<evidence type="ECO:0007744" key="18">
    <source>
    </source>
</evidence>
<feature type="chain" id="PRO_0000213322" description="Eukaryotic translation initiation factor 4 gamma 1">
    <location>
        <begin position="1"/>
        <end position="1600"/>
    </location>
</feature>
<feature type="domain" description="MIF4G" evidence="4">
    <location>
        <begin position="765"/>
        <end position="993"/>
    </location>
</feature>
<feature type="domain" description="MI" evidence="4">
    <location>
        <begin position="1241"/>
        <end position="1363"/>
    </location>
</feature>
<feature type="domain" description="W2" evidence="3">
    <location>
        <begin position="1429"/>
        <end position="1599"/>
    </location>
</feature>
<feature type="region of interest" description="Disordered" evidence="5">
    <location>
        <begin position="1"/>
        <end position="88"/>
    </location>
</feature>
<feature type="region of interest" description="Disordered" evidence="5">
    <location>
        <begin position="173"/>
        <end position="230"/>
    </location>
</feature>
<feature type="region of interest" description="PABPC1-binding" evidence="1">
    <location>
        <begin position="179"/>
        <end position="207"/>
    </location>
</feature>
<feature type="region of interest" description="Disordered" evidence="5">
    <location>
        <begin position="243"/>
        <end position="326"/>
    </location>
</feature>
<feature type="region of interest" description="Disordered" evidence="5">
    <location>
        <begin position="366"/>
        <end position="501"/>
    </location>
</feature>
<feature type="region of interest" description="Disordered" evidence="5">
    <location>
        <begin position="507"/>
        <end position="526"/>
    </location>
</feature>
<feature type="region of interest" description="Disordered" evidence="5">
    <location>
        <begin position="541"/>
        <end position="606"/>
    </location>
</feature>
<feature type="region of interest" description="EIF4E-binding" evidence="1">
    <location>
        <begin position="611"/>
        <end position="622"/>
    </location>
</feature>
<feature type="region of interest" description="Disordered" evidence="5">
    <location>
        <begin position="667"/>
        <end position="719"/>
    </location>
</feature>
<feature type="region of interest" description="eIF3/EIF4A-binding" evidence="1">
    <location>
        <begin position="686"/>
        <end position="1089"/>
    </location>
</feature>
<feature type="region of interest" description="Disordered" evidence="5">
    <location>
        <begin position="734"/>
        <end position="760"/>
    </location>
</feature>
<feature type="region of interest" description="Disordered" evidence="5">
    <location>
        <begin position="1029"/>
        <end position="1117"/>
    </location>
</feature>
<feature type="region of interest" description="Disordered" evidence="5">
    <location>
        <begin position="1129"/>
        <end position="1238"/>
    </location>
</feature>
<feature type="region of interest" description="EIF4A-binding" evidence="1">
    <location>
        <begin position="1450"/>
        <end position="1600"/>
    </location>
</feature>
<feature type="region of interest" description="Necessary but not sufficient for MKNK1-binding" evidence="1">
    <location>
        <begin position="1585"/>
        <end position="1600"/>
    </location>
</feature>
<feature type="compositionally biased region" description="Pro residues" evidence="5">
    <location>
        <begin position="7"/>
        <end position="24"/>
    </location>
</feature>
<feature type="compositionally biased region" description="Polar residues" evidence="5">
    <location>
        <begin position="34"/>
        <end position="48"/>
    </location>
</feature>
<feature type="compositionally biased region" description="Low complexity" evidence="5">
    <location>
        <begin position="60"/>
        <end position="79"/>
    </location>
</feature>
<feature type="compositionally biased region" description="Polar residues" evidence="5">
    <location>
        <begin position="208"/>
        <end position="220"/>
    </location>
</feature>
<feature type="compositionally biased region" description="Pro residues" evidence="5">
    <location>
        <begin position="269"/>
        <end position="280"/>
    </location>
</feature>
<feature type="compositionally biased region" description="Low complexity" evidence="5">
    <location>
        <begin position="438"/>
        <end position="449"/>
    </location>
</feature>
<feature type="compositionally biased region" description="Acidic residues" evidence="5">
    <location>
        <begin position="463"/>
        <end position="479"/>
    </location>
</feature>
<feature type="compositionally biased region" description="Polar residues" evidence="5">
    <location>
        <begin position="551"/>
        <end position="562"/>
    </location>
</feature>
<feature type="compositionally biased region" description="Basic and acidic residues" evidence="5">
    <location>
        <begin position="578"/>
        <end position="587"/>
    </location>
</feature>
<feature type="compositionally biased region" description="Basic and acidic residues" evidence="5">
    <location>
        <begin position="596"/>
        <end position="606"/>
    </location>
</feature>
<feature type="compositionally biased region" description="Low complexity" evidence="5">
    <location>
        <begin position="697"/>
        <end position="707"/>
    </location>
</feature>
<feature type="compositionally biased region" description="Basic and acidic residues" evidence="5">
    <location>
        <begin position="745"/>
        <end position="760"/>
    </location>
</feature>
<feature type="compositionally biased region" description="Basic and acidic residues" evidence="5">
    <location>
        <begin position="1148"/>
        <end position="1180"/>
    </location>
</feature>
<feature type="compositionally biased region" description="Basic and acidic residues" evidence="5">
    <location>
        <begin position="1188"/>
        <end position="1225"/>
    </location>
</feature>
<feature type="modified residue" description="Phosphoserine" evidence="16">
    <location>
        <position position="15"/>
    </location>
</feature>
<feature type="modified residue" description="Omega-N-methylarginine" evidence="2">
    <location>
        <position position="80"/>
    </location>
</feature>
<feature type="modified residue" description="Omega-N-methylarginine" evidence="18">
    <location>
        <position position="117"/>
    </location>
</feature>
<feature type="modified residue" description="Phosphothreonine" evidence="16">
    <location>
        <position position="214"/>
    </location>
</feature>
<feature type="modified residue" description="Phosphoserine" evidence="16">
    <location>
        <position position="230"/>
    </location>
</feature>
<feature type="modified residue" description="Phosphoserine" evidence="2">
    <location>
        <position position="324"/>
    </location>
</feature>
<feature type="modified residue" description="N6-acetyllysine" evidence="17">
    <location>
        <position position="606"/>
    </location>
</feature>
<feature type="modified residue" description="Phosphothreonine" evidence="2">
    <location>
        <position position="651"/>
    </location>
</feature>
<feature type="modified residue" description="Omega-N-methylarginine" evidence="18">
    <location>
        <position position="689"/>
    </location>
</feature>
<feature type="modified residue" description="Omega-N-methylarginine" evidence="2">
    <location>
        <position position="698"/>
    </location>
</feature>
<feature type="modified residue" description="Phosphoserine" evidence="2">
    <location>
        <position position="1032"/>
    </location>
</feature>
<feature type="modified residue" description="Omega-N-methylarginine" evidence="18">
    <location>
        <position position="1036"/>
    </location>
</feature>
<feature type="modified residue" description="Omega-N-methylarginine" evidence="18">
    <location>
        <position position="1046"/>
    </location>
</feature>
<feature type="modified residue" description="Phosphoserine" evidence="2">
    <location>
        <position position="1081"/>
    </location>
</feature>
<feature type="modified residue" description="Phosphoserine" evidence="16">
    <location>
        <position position="1096"/>
    </location>
</feature>
<feature type="modified residue" description="N6-acetyllysine" evidence="2">
    <location>
        <position position="1099"/>
    </location>
</feature>
<feature type="modified residue" description="Phosphoserine" evidence="2">
    <location>
        <position position="1147"/>
    </location>
</feature>
<feature type="modified residue" description="Phosphoserine" evidence="2">
    <location>
        <position position="1149"/>
    </location>
</feature>
<feature type="modified residue" description="Phosphoserine; by PKC/PRKCA" evidence="2">
    <location>
        <position position="1187"/>
    </location>
</feature>
<feature type="modified residue" description="Phosphoserine" evidence="15">
    <location>
        <position position="1189"/>
    </location>
</feature>
<feature type="modified residue" description="Phosphoserine" evidence="2">
    <location>
        <position position="1196"/>
    </location>
</feature>
<feature type="modified residue" description="Phosphoserine" evidence="13 16">
    <location>
        <position position="1211"/>
    </location>
</feature>
<feature type="modified residue" description="Phosphothreonine" evidence="2">
    <location>
        <position position="1213"/>
    </location>
</feature>
<feature type="modified residue" description="Phosphoserine" evidence="12 14 15">
    <location>
        <position position="1231"/>
    </location>
</feature>
<feature type="modified residue" description="Phosphoserine" evidence="2">
    <location>
        <position position="1238"/>
    </location>
</feature>
<feature type="modified residue" description="Phosphoserine" evidence="14">
    <location>
        <position position="1597"/>
    </location>
</feature>
<feature type="splice variant" id="VSP_013974" description="In isoform 2." evidence="9 10">
    <location>
        <begin position="49"/>
        <end position="55"/>
    </location>
</feature>
<feature type="splice variant" id="VSP_013975" description="In isoform 2." evidence="9 10">
    <location>
        <begin position="1046"/>
        <end position="1052"/>
    </location>
</feature>
<organism>
    <name type="scientific">Mus musculus</name>
    <name type="common">Mouse</name>
    <dbReference type="NCBI Taxonomy" id="10090"/>
    <lineage>
        <taxon>Eukaryota</taxon>
        <taxon>Metazoa</taxon>
        <taxon>Chordata</taxon>
        <taxon>Craniata</taxon>
        <taxon>Vertebrata</taxon>
        <taxon>Euteleostomi</taxon>
        <taxon>Mammalia</taxon>
        <taxon>Eutheria</taxon>
        <taxon>Euarchontoglires</taxon>
        <taxon>Glires</taxon>
        <taxon>Rodentia</taxon>
        <taxon>Myomorpha</taxon>
        <taxon>Muroidea</taxon>
        <taxon>Muridae</taxon>
        <taxon>Murinae</taxon>
        <taxon>Mus</taxon>
        <taxon>Mus</taxon>
    </lineage>
</organism>
<dbReference type="EMBL" id="BC066038">
    <property type="protein sequence ID" value="AAH66038.1"/>
    <property type="molecule type" value="mRNA"/>
</dbReference>
<dbReference type="EMBL" id="BC066103">
    <property type="protein sequence ID" value="AAH66103.1"/>
    <property type="molecule type" value="mRNA"/>
</dbReference>
<dbReference type="EMBL" id="BC079675">
    <property type="protein sequence ID" value="AAH79675.1"/>
    <property type="molecule type" value="mRNA"/>
</dbReference>
<dbReference type="EMBL" id="AK053144">
    <property type="protein sequence ID" value="BAC35282.1"/>
    <property type="molecule type" value="mRNA"/>
</dbReference>
<dbReference type="CCDS" id="CCDS28055.1">
    <molecule id="Q6NZJ6-1"/>
</dbReference>
<dbReference type="CCDS" id="CCDS84213.1">
    <molecule id="Q6NZJ6-2"/>
</dbReference>
<dbReference type="RefSeq" id="NP_001291361.1">
    <molecule id="Q6NZJ6-2"/>
    <property type="nucleotide sequence ID" value="NM_001304432.2"/>
</dbReference>
<dbReference type="RefSeq" id="NP_001390392.1">
    <molecule id="Q6NZJ6-2"/>
    <property type="nucleotide sequence ID" value="NM_001403463.1"/>
</dbReference>
<dbReference type="RefSeq" id="NP_666053.2">
    <molecule id="Q6NZJ6-1"/>
    <property type="nucleotide sequence ID" value="NM_145941.3"/>
</dbReference>
<dbReference type="RefSeq" id="XP_006522000.1">
    <molecule id="Q6NZJ6-1"/>
    <property type="nucleotide sequence ID" value="XM_006521937.2"/>
</dbReference>
<dbReference type="BMRB" id="Q6NZJ6"/>
<dbReference type="SMR" id="Q6NZJ6"/>
<dbReference type="BioGRID" id="228998">
    <property type="interactions" value="37"/>
</dbReference>
<dbReference type="ComplexPortal" id="CPX-5862">
    <property type="entry name" value="Eukaryotic translation initiation factor 4F, EIF4A2 and EIF4G1 variant"/>
</dbReference>
<dbReference type="ComplexPortal" id="CPX-5863">
    <property type="entry name" value="Eukaryotic translation initiation factor 4F, EIF4A1 and EIF4G1 variant"/>
</dbReference>
<dbReference type="DIP" id="DIP-42771N"/>
<dbReference type="FunCoup" id="Q6NZJ6">
    <property type="interactions" value="3095"/>
</dbReference>
<dbReference type="IntAct" id="Q6NZJ6">
    <property type="interactions" value="12"/>
</dbReference>
<dbReference type="MINT" id="Q6NZJ6"/>
<dbReference type="STRING" id="10090.ENSMUSP00000111120"/>
<dbReference type="GlyGen" id="Q6NZJ6">
    <property type="glycosylation" value="9 sites, 1 N-linked glycan (1 site), 1 O-linked glycan (4 sites)"/>
</dbReference>
<dbReference type="iPTMnet" id="Q6NZJ6"/>
<dbReference type="MetOSite" id="Q6NZJ6"/>
<dbReference type="PhosphoSitePlus" id="Q6NZJ6"/>
<dbReference type="SwissPalm" id="Q6NZJ6"/>
<dbReference type="jPOST" id="Q6NZJ6"/>
<dbReference type="PaxDb" id="10090-ENSMUSP00000047678"/>
<dbReference type="PeptideAtlas" id="Q6NZJ6"/>
<dbReference type="ProteomicsDB" id="269377">
    <molecule id="Q6NZJ6-1"/>
</dbReference>
<dbReference type="ProteomicsDB" id="269378">
    <molecule id="Q6NZJ6-2"/>
</dbReference>
<dbReference type="Pumba" id="Q6NZJ6"/>
<dbReference type="Antibodypedia" id="3406">
    <property type="antibodies" value="615 antibodies from 39 providers"/>
</dbReference>
<dbReference type="DNASU" id="208643"/>
<dbReference type="Ensembl" id="ENSMUST00000044783.14">
    <molecule id="Q6NZJ6-1"/>
    <property type="protein sequence ID" value="ENSMUSP00000047678.8"/>
    <property type="gene ID" value="ENSMUSG00000045983.17"/>
</dbReference>
<dbReference type="Ensembl" id="ENSMUST00000115460.8">
    <molecule id="Q6NZJ6-1"/>
    <property type="protein sequence ID" value="ENSMUSP00000111120.2"/>
    <property type="gene ID" value="ENSMUSG00000045983.17"/>
</dbReference>
<dbReference type="Ensembl" id="ENSMUST00000115463.8">
    <molecule id="Q6NZJ6-2"/>
    <property type="protein sequence ID" value="ENSMUSP00000111123.2"/>
    <property type="gene ID" value="ENSMUSG00000045983.17"/>
</dbReference>
<dbReference type="GeneID" id="208643"/>
<dbReference type="KEGG" id="mmu:208643"/>
<dbReference type="UCSC" id="uc007yqs.2">
    <molecule id="Q6NZJ6-1"/>
    <property type="organism name" value="mouse"/>
</dbReference>
<dbReference type="UCSC" id="uc012acy.2">
    <molecule id="Q6NZJ6-2"/>
    <property type="organism name" value="mouse"/>
</dbReference>
<dbReference type="AGR" id="MGI:2384784"/>
<dbReference type="CTD" id="1981"/>
<dbReference type="MGI" id="MGI:2384784">
    <property type="gene designation" value="Eif4g1"/>
</dbReference>
<dbReference type="VEuPathDB" id="HostDB:ENSMUSG00000045983"/>
<dbReference type="eggNOG" id="KOG0401">
    <property type="taxonomic scope" value="Eukaryota"/>
</dbReference>
<dbReference type="GeneTree" id="ENSGT00940000154648"/>
<dbReference type="InParanoid" id="Q6NZJ6"/>
<dbReference type="OMA" id="KRERKTX"/>
<dbReference type="OrthoDB" id="514777at2759"/>
<dbReference type="PhylomeDB" id="Q6NZJ6"/>
<dbReference type="TreeFam" id="TF101527"/>
<dbReference type="Reactome" id="R-MMU-1169408">
    <property type="pathway name" value="ISG15 antiviral mechanism"/>
</dbReference>
<dbReference type="Reactome" id="R-MMU-156827">
    <property type="pathway name" value="L13a-mediated translational silencing of Ceruloplasmin expression"/>
</dbReference>
<dbReference type="Reactome" id="R-MMU-166208">
    <property type="pathway name" value="mTORC1-mediated signalling"/>
</dbReference>
<dbReference type="Reactome" id="R-MMU-429947">
    <property type="pathway name" value="Deadenylation of mRNA"/>
</dbReference>
<dbReference type="Reactome" id="R-MMU-450408">
    <property type="pathway name" value="AUF1 (hnRNP D0) binds and destabilizes mRNA"/>
</dbReference>
<dbReference type="Reactome" id="R-MMU-72649">
    <property type="pathway name" value="Translation initiation complex formation"/>
</dbReference>
<dbReference type="Reactome" id="R-MMU-72662">
    <property type="pathway name" value="Activation of the mRNA upon binding of the cap-binding complex and eIFs, and subsequent binding to 43S"/>
</dbReference>
<dbReference type="Reactome" id="R-MMU-72702">
    <property type="pathway name" value="Ribosomal scanning and start codon recognition"/>
</dbReference>
<dbReference type="Reactome" id="R-MMU-72706">
    <property type="pathway name" value="GTP hydrolysis and joining of the 60S ribosomal subunit"/>
</dbReference>
<dbReference type="Reactome" id="R-MMU-975956">
    <property type="pathway name" value="Nonsense Mediated Decay (NMD) independent of the Exon Junction Complex (EJC)"/>
</dbReference>
<dbReference type="Reactome" id="R-MMU-975957">
    <property type="pathway name" value="Nonsense Mediated Decay (NMD) enhanced by the Exon Junction Complex (EJC)"/>
</dbReference>
<dbReference type="BioGRID-ORCS" id="208643">
    <property type="hits" value="7 hits in 65 CRISPR screens"/>
</dbReference>
<dbReference type="CD-CODE" id="764D0258">
    <property type="entry name" value="Neuronal RNP granule"/>
</dbReference>
<dbReference type="CD-CODE" id="CE726F99">
    <property type="entry name" value="Postsynaptic density"/>
</dbReference>
<dbReference type="CD-CODE" id="D12E4DB9">
    <property type="entry name" value="Stress granule"/>
</dbReference>
<dbReference type="ChiTaRS" id="Eif4g1">
    <property type="organism name" value="mouse"/>
</dbReference>
<dbReference type="PRO" id="PR:Q6NZJ6"/>
<dbReference type="Proteomes" id="UP000000589">
    <property type="component" value="Chromosome 16"/>
</dbReference>
<dbReference type="RNAct" id="Q6NZJ6">
    <property type="molecule type" value="protein"/>
</dbReference>
<dbReference type="Bgee" id="ENSMUSG00000045983">
    <property type="expression patterns" value="Expressed in lacrimal gland and 257 other cell types or tissues"/>
</dbReference>
<dbReference type="ExpressionAtlas" id="Q6NZJ6">
    <property type="expression patterns" value="baseline and differential"/>
</dbReference>
<dbReference type="GO" id="GO:0005737">
    <property type="term" value="C:cytoplasm"/>
    <property type="evidence" value="ECO:0000314"/>
    <property type="project" value="MGI"/>
</dbReference>
<dbReference type="GO" id="GO:0010494">
    <property type="term" value="C:cytoplasmic stress granule"/>
    <property type="evidence" value="ECO:0000250"/>
    <property type="project" value="UniProtKB"/>
</dbReference>
<dbReference type="GO" id="GO:0005829">
    <property type="term" value="C:cytosol"/>
    <property type="evidence" value="ECO:0000304"/>
    <property type="project" value="Reactome"/>
</dbReference>
<dbReference type="GO" id="GO:0016281">
    <property type="term" value="C:eukaryotic translation initiation factor 4F complex"/>
    <property type="evidence" value="ECO:0000303"/>
    <property type="project" value="ComplexPortal"/>
</dbReference>
<dbReference type="GO" id="GO:0005634">
    <property type="term" value="C:nucleus"/>
    <property type="evidence" value="ECO:0000250"/>
    <property type="project" value="UniProtKB"/>
</dbReference>
<dbReference type="GO" id="GO:0005840">
    <property type="term" value="C:ribosome"/>
    <property type="evidence" value="ECO:0007669"/>
    <property type="project" value="Ensembl"/>
</dbReference>
<dbReference type="GO" id="GO:0005524">
    <property type="term" value="F:ATP binding"/>
    <property type="evidence" value="ECO:0007669"/>
    <property type="project" value="Ensembl"/>
</dbReference>
<dbReference type="GO" id="GO:0008190">
    <property type="term" value="F:eukaryotic initiation factor 4E binding"/>
    <property type="evidence" value="ECO:0007669"/>
    <property type="project" value="Ensembl"/>
</dbReference>
<dbReference type="GO" id="GO:0003729">
    <property type="term" value="F:mRNA binding"/>
    <property type="evidence" value="ECO:0007669"/>
    <property type="project" value="Ensembl"/>
</dbReference>
<dbReference type="GO" id="GO:0008135">
    <property type="term" value="F:translation factor activity, RNA binding"/>
    <property type="evidence" value="ECO:0007669"/>
    <property type="project" value="Ensembl"/>
</dbReference>
<dbReference type="GO" id="GO:0003743">
    <property type="term" value="F:translation initiation factor activity"/>
    <property type="evidence" value="ECO:0007669"/>
    <property type="project" value="UniProtKB-KW"/>
</dbReference>
<dbReference type="GO" id="GO:0001662">
    <property type="term" value="P:behavioral fear response"/>
    <property type="evidence" value="ECO:0000316"/>
    <property type="project" value="MGI"/>
</dbReference>
<dbReference type="GO" id="GO:0031669">
    <property type="term" value="P:cellular response to nutrient levels"/>
    <property type="evidence" value="ECO:0007669"/>
    <property type="project" value="Ensembl"/>
</dbReference>
<dbReference type="GO" id="GO:0097009">
    <property type="term" value="P:energy homeostasis"/>
    <property type="evidence" value="ECO:0007669"/>
    <property type="project" value="Ensembl"/>
</dbReference>
<dbReference type="GO" id="GO:0035278">
    <property type="term" value="P:miRNA-mediated gene silencing by inhibition of translation"/>
    <property type="evidence" value="ECO:0007669"/>
    <property type="project" value="Ensembl"/>
</dbReference>
<dbReference type="GO" id="GO:0010507">
    <property type="term" value="P:negative regulation of autophagy"/>
    <property type="evidence" value="ECO:0007669"/>
    <property type="project" value="Ensembl"/>
</dbReference>
<dbReference type="GO" id="GO:0030182">
    <property type="term" value="P:neuron differentiation"/>
    <property type="evidence" value="ECO:0000315"/>
    <property type="project" value="MGI"/>
</dbReference>
<dbReference type="GO" id="GO:0030307">
    <property type="term" value="P:positive regulation of cell growth"/>
    <property type="evidence" value="ECO:0007669"/>
    <property type="project" value="Ensembl"/>
</dbReference>
<dbReference type="GO" id="GO:1905537">
    <property type="term" value="P:positive regulation of eukaryotic translation initiation factor 4F complex assembly"/>
    <property type="evidence" value="ECO:0007669"/>
    <property type="project" value="Ensembl"/>
</dbReference>
<dbReference type="GO" id="GO:1900087">
    <property type="term" value="P:positive regulation of G1/S transition of mitotic cell cycle"/>
    <property type="evidence" value="ECO:0007669"/>
    <property type="project" value="Ensembl"/>
</dbReference>
<dbReference type="GO" id="GO:0045666">
    <property type="term" value="P:positive regulation of neuron differentiation"/>
    <property type="evidence" value="ECO:0000315"/>
    <property type="project" value="MGI"/>
</dbReference>
<dbReference type="GO" id="GO:1904377">
    <property type="term" value="P:positive regulation of protein localization to cell periphery"/>
    <property type="evidence" value="ECO:0007669"/>
    <property type="project" value="Ensembl"/>
</dbReference>
<dbReference type="GO" id="GO:0036493">
    <property type="term" value="P:positive regulation of translation in response to endoplasmic reticulum stress"/>
    <property type="evidence" value="ECO:0000250"/>
    <property type="project" value="UniProtKB"/>
</dbReference>
<dbReference type="GO" id="GO:1905606">
    <property type="term" value="P:regulation of presynapse assembly"/>
    <property type="evidence" value="ECO:0007669"/>
    <property type="project" value="Ensembl"/>
</dbReference>
<dbReference type="GO" id="GO:0006446">
    <property type="term" value="P:regulation of translational initiation"/>
    <property type="evidence" value="ECO:0007669"/>
    <property type="project" value="Ensembl"/>
</dbReference>
<dbReference type="GO" id="GO:0006413">
    <property type="term" value="P:translational initiation"/>
    <property type="evidence" value="ECO:0000303"/>
    <property type="project" value="ComplexPortal"/>
</dbReference>
<dbReference type="CDD" id="cd11559">
    <property type="entry name" value="W2_eIF4G1_like"/>
    <property type="match status" value="1"/>
</dbReference>
<dbReference type="FunFam" id="1.25.40.180:FF:000001">
    <property type="entry name" value="Eukaryotic translation initiation factor 4 gamma, 3, putative"/>
    <property type="match status" value="1"/>
</dbReference>
<dbReference type="FunFam" id="1.25.40.180:FF:000002">
    <property type="entry name" value="Eukaryotic translation initiation factor 4 gamma, 3, putative"/>
    <property type="match status" value="1"/>
</dbReference>
<dbReference type="FunFam" id="1.25.40.180:FF:000003">
    <property type="entry name" value="Putative eukaryotic translation initiation factor 4 gamma 1"/>
    <property type="match status" value="1"/>
</dbReference>
<dbReference type="Gene3D" id="1.25.40.180">
    <property type="match status" value="3"/>
</dbReference>
<dbReference type="InterPro" id="IPR016024">
    <property type="entry name" value="ARM-type_fold"/>
</dbReference>
<dbReference type="InterPro" id="IPR003891">
    <property type="entry name" value="Initiation_fac_eIF4g_MI"/>
</dbReference>
<dbReference type="InterPro" id="IPR003890">
    <property type="entry name" value="MIF4G-like_typ-3"/>
</dbReference>
<dbReference type="InterPro" id="IPR003307">
    <property type="entry name" value="W2_domain"/>
</dbReference>
<dbReference type="PANTHER" id="PTHR23253">
    <property type="entry name" value="EUKARYOTIC TRANSLATION INITIATION FACTOR 4 GAMMA"/>
    <property type="match status" value="1"/>
</dbReference>
<dbReference type="PANTHER" id="PTHR23253:SF10">
    <property type="entry name" value="EUKARYOTIC TRANSLATION INITIATION FACTOR 4 GAMMA 1"/>
    <property type="match status" value="1"/>
</dbReference>
<dbReference type="Pfam" id="PF02847">
    <property type="entry name" value="MA3"/>
    <property type="match status" value="1"/>
</dbReference>
<dbReference type="Pfam" id="PF02854">
    <property type="entry name" value="MIF4G"/>
    <property type="match status" value="1"/>
</dbReference>
<dbReference type="Pfam" id="PF02020">
    <property type="entry name" value="W2"/>
    <property type="match status" value="1"/>
</dbReference>
<dbReference type="SMART" id="SM00515">
    <property type="entry name" value="eIF5C"/>
    <property type="match status" value="1"/>
</dbReference>
<dbReference type="SMART" id="SM00544">
    <property type="entry name" value="MA3"/>
    <property type="match status" value="1"/>
</dbReference>
<dbReference type="SMART" id="SM00543">
    <property type="entry name" value="MIF4G"/>
    <property type="match status" value="1"/>
</dbReference>
<dbReference type="SUPFAM" id="SSF48371">
    <property type="entry name" value="ARM repeat"/>
    <property type="match status" value="3"/>
</dbReference>
<dbReference type="PROSITE" id="PS51366">
    <property type="entry name" value="MI"/>
    <property type="match status" value="1"/>
</dbReference>
<dbReference type="PROSITE" id="PS51363">
    <property type="entry name" value="W2"/>
    <property type="match status" value="1"/>
</dbReference>
<keyword id="KW-0007">Acetylation</keyword>
<keyword id="KW-0025">Alternative splicing</keyword>
<keyword id="KW-0963">Cytoplasm</keyword>
<keyword id="KW-0396">Initiation factor</keyword>
<keyword id="KW-0488">Methylation</keyword>
<keyword id="KW-0539">Nucleus</keyword>
<keyword id="KW-0597">Phosphoprotein</keyword>
<keyword id="KW-0648">Protein biosynthesis</keyword>
<keyword id="KW-1185">Reference proteome</keyword>
<keyword id="KW-0694">RNA-binding</keyword>
<keyword id="KW-0810">Translation regulation</keyword>
<protein>
    <recommendedName>
        <fullName>Eukaryotic translation initiation factor 4 gamma 1</fullName>
        <shortName>eIF-4-gamma 1</shortName>
        <shortName>eIF-4G 1</shortName>
        <shortName>eIF-4G1</shortName>
    </recommendedName>
</protein>
<comment type="function">
    <text evidence="2">Component of the protein complex eIF4F, which is involved in the recognition of the mRNA cap, ATP-dependent unwinding of 5'-terminal secondary structure and recruitment of mRNA to the ribosome. Exists in two complexes, either with EIF1 or with EIF4E (mutually exclusive). Together with EIF1, is required for leaky scanning, in particular for avoiding cap-proximal start codon. Together with EIF4E, antagonizes the scanning promoted by EIF1-EIF4G1 and locates the start codon (through a TISU element) without scanning. As a member of the eIF4F complex, required for endoplasmic reticulum stress-induced ATF4 mRNA translation.</text>
</comment>
<comment type="subunit">
    <text evidence="2 6">eIF4F is a multi-subunit complex, the composition of which varies with external and internal environmental conditions. It is composed of at least EIF4A, EIF4E (cap-binding) and EIF4G1/EIF4G3. Interacts with eIF3 complex, mutually exclusive with EIF4A1 or EIF4A2, EIF4E and through its N-terminus with PABPC1. Interacts with EIF4E or with EIF1 (mutually exclusive) through a common binding site. Interacts through its C-terminus with the serine/threonine kinases MKNK1, and with MKNK2. Appears to act as a scaffold protein, holding these enzymes in place to phosphorylate EIF4E. Non-phosphorylated EIF4EBP1 competes with EIF4G1/EIF4G3 to interact with EIF4E; insulin stimulated MAP-kinase (MAPK1 and MAPK3) phosphorylation of EIF4EBP1 causes dissociation of the complex allowing EIF4G1/EIF4G3 to bind and consequent initiation of translation. EIF4G1/EIF4G3 interacts with PABPC1 to bring about circularization of the mRNA (By similarity). Interacts with EIF4E3 (PubMed:15153109). Interacts with CIRBP and MIF4GD. Interacts with RBM4. Interacts with HNRNPD/AUF1; the interaction requires RNA. Interacts with DDX3X; the interaction requires RNA. Interacts with DAZAP2 (By similarity).</text>
</comment>
<comment type="subunit">
    <text evidence="7 8">(Microbial infection) Interacts with murine norovirus viral genome-linked protein (via C-terminus); this interaction plays a role in translation of viral proteins.</text>
</comment>
<comment type="interaction">
    <interactant intactId="EBI-8175606">
        <id>Q6NZJ6</id>
    </interactant>
    <interactant intactId="EBI-4286513">
        <id>Q8JZQ9</id>
        <label>Eif3b</label>
    </interactant>
    <organismsDiffer>false</organismsDiffer>
    <experiments>2</experiments>
</comment>
<comment type="interaction">
    <interactant intactId="EBI-8175606">
        <id>Q6NZJ6</id>
    </interactant>
    <interactant intactId="EBI-7466616">
        <id>Q9QZD9</id>
        <label>Eif3i</label>
    </interactant>
    <organismsDiffer>false</organismsDiffer>
    <experiments>3</experiments>
</comment>
<comment type="interaction">
    <interactant intactId="EBI-8175606">
        <id>Q6NZJ6</id>
    </interactant>
    <interactant intactId="EBI-6665935">
        <id>P60843</id>
        <label>Eif4a1</label>
    </interactant>
    <organismsDiffer>false</organismsDiffer>
    <experiments>2</experiments>
</comment>
<comment type="interaction">
    <interactant intactId="EBI-8175606">
        <id>Q6NZJ6</id>
    </interactant>
    <interactant intactId="EBI-2000006">
        <id>P63073</id>
        <label>Eif4e</label>
    </interactant>
    <organismsDiffer>false</organismsDiffer>
    <experiments>7</experiments>
</comment>
<comment type="subcellular location">
    <subcellularLocation>
        <location evidence="2">Cytoplasm</location>
    </subcellularLocation>
    <subcellularLocation>
        <location evidence="2">Nucleus</location>
    </subcellularLocation>
    <subcellularLocation>
        <location evidence="2">Cytoplasm</location>
        <location evidence="2">Stress granule</location>
    </subcellularLocation>
</comment>
<comment type="alternative products">
    <event type="alternative splicing"/>
    <isoform>
        <id>Q6NZJ6-1</id>
        <name>1</name>
        <sequence type="displayed"/>
    </isoform>
    <isoform>
        <id>Q6NZJ6-2</id>
        <name>2</name>
        <sequence type="described" ref="VSP_013974 VSP_013975"/>
    </isoform>
</comment>
<comment type="PTM">
    <text evidence="2">Phosphorylated at multiple sites in vivo. Phosphorylation at Ser-1187 by PRKCA induces binding to MKNK1.</text>
</comment>
<comment type="similarity">
    <text evidence="11">Belongs to the eukaryotic initiation factor 4G family.</text>
</comment>
<proteinExistence type="evidence at protein level"/>
<sequence>MNKAPQPTGPPPARSPGLPQPAFPPGQTAPVVFSTPQATQMNTPSQPRQGGFRSLQHFYPSRAQPPSSAASRVQSAAPARPGPAPHVYPAGSQVMMIPSQISYSASQGAYYIPGQGRSTYVVPTQQYPVQPGAPGFYPGASPTEFGTYAGAYYPAQGVQQFPASVAPAPVLMNQPPQIAPKRERKTIRIRDPNQGGKDITEEIMSGARTASTPTPPQTGGSLEPQPNGESPQVAVIIRPDDRSQGAAIGGRPGLPGPEHSPGTESQPSSPSPTPSPPPILEPGSESNLGVLSIPGDTMTTGMIPMSVEESTPISCETGEPYCLSPEPTLAEPILEVEVTLSKPIPESEFSSSPLQVSTALVPHKVETHEPNGVIPSEDLEPEVESSTEPAPPPLSPCASESLVPIAPTAQPEELLNGAPSPPAVDLSPVSEPEEQAKKVSSAALASILSPAPPVAPSDTSPAQEEEMEEDDDDEEGGEAESEKGGEDVPLDSTPVPAQLSQNLEVAAATQVAVSVPKRRRKIKELNKKEAVGDLLDAFKEVDPAVPEVENQPPTGSNPSPESEGSMVPTQPEETEETWDSKEDKIHNAENIQPGEQKYEYKSDQWKPLNLEEKKRYDREFLLGFQFIFASMQKPEGLPHITDVVLDKANKTPLRQLDPSRLPGINCGPDFTPSFANLGRPALSNRGPPRGGPGGELPRGPAGLGPRRSQQGPRKETRKIISSVIMTEDIKLNKAEKAWKPSSKRTAADKDRGEEDADGSKTQDLFRRVRSILNKLTPQMFQQLMKQVTQLAIDTEERLKGVIDLIFEKAISEPNFSVAYANMCRCLMALKVPTTEKPTVTVNFRKLLLNRCQKEFEKDKDDDEVFEKKQKEMDEAATAEERGRLKEELEEARDIARRRSLGNIKFIGELFKLKMLTEAIMHDCVVKLLKNHDEESLECLCRLLTTIGKDLDFAKAKPRMDQYFNQMEKIIKEKKTSSRIRFMLQDVLDLRQSNWVPRRGDQGPKTIDQIHKEAEMEEHREHIKVQQLMAKGSDKRRGGPPGPPINRGLPLVDDGGWNTVPISKGSRPIDTSRLTKITKPGSIDSNNQLFAPGGRLSWGKGSSGGSGAKPSDTASEATRPATLNRFSALQQTLPAENTDNRRVVQRSSLSRERGEKAGDRGDRLERSERGGDRGDRLDRARTPATKRSFSKEVEERSRERPSQPEGLRKAASLTEDRGRDPVKREATLPPVSPPKAALSVDEVEKKSKAIIEEYLHLNDMKEAVQCVQELASPSLLFIFVRLGIESTLERSTIAREHMGRLLHQLLCAGHLSTAQYYQGLYETLELAEDMEIDIPHVWLYLAELITPILQEDGVPMGELFREITKPLRPMGKATSLLLEILGLLCKSMGPKKVGMLWREAGLSWREFLAEGQDVGSFVAEKKVEYTLGEESEAPGQRTLAFEELRRQLEKLLKDGGSNQRVFDWIDANLNEQQIASNTLVRALMTTVCYSAIIFETPLRVDVQVLKVRARLLQKYLCDEQKELQALYALQALVVTLEQPANLLRMFFDALYDEDVVKEDAFYSWESSKDPAEQQGKGVALKSVTAFFNWLREAEDEESDHN</sequence>
<name>IF4G1_MOUSE</name>